<sequence length="517" mass="56347">MAQPVHSLCSAFGLQCCLLFLLASWGAGATTFQEYQKTGELSTSDHIFPLTPGLVYSIPFDHIVLHSGQRPPELPKSTEIHEQKRHCNTTRHSKPTDKPTGNSKTIDHKSSTDNHEAPPTSEENSSNQGKDPMIRNQRSVDPADSTTTHKESAGKKHITPAPKSKINCRKSTTGKSTVTRKSDKTGRPLEKSMSTLDKTSTSSHKTTTSFHNSGNSQTKQKSTSFPEKITAASKTTYKTTGTPEESEKTEDSRTTVASDKLLTKTTKNIQETISANELTQSLAEPTEHGGRTANENNTPSPAEPTENRERTANENKKTICTKGKNTPVPEKPTENLGNTTLTTETIKAPVKSTENPEKTAAVTKTIKPSVKVTGDKSLTTTSSHLNKTEVTHQVPTGSFTLITSRTKLSSITSEATGNESHPYLNKDGSQKGIHAGQMGENDSFPAWAIVIVVLVAVILLLVFLGLIFLVSYMMRTRRTLTQNTQYNDAEDEGGPNSYPVYLMEQQNLGMGQIPSPR</sequence>
<reference key="1">
    <citation type="journal article" date="2002" name="Immunogenetics">
        <title>Identification of novel candidate genes in the diffuse panbronchiolitis critical region of the class I human MHC.</title>
        <authorList>
            <person name="Matsuzaka Y."/>
            <person name="Tounai K."/>
            <person name="Denda A."/>
            <person name="Tomizawa M."/>
            <person name="Makino S."/>
            <person name="Okamoto K."/>
            <person name="Keicho N."/>
            <person name="Oka A."/>
            <person name="Kulski J.K."/>
            <person name="Tamiya G."/>
            <person name="Inoko H."/>
        </authorList>
    </citation>
    <scope>NUCLEOTIDE SEQUENCE [MRNA] (ISOFORM 2)</scope>
    <scope>TISSUE SPECIFICITY</scope>
    <scope>DEVELOPMENTAL STAGE</scope>
    <source>
        <tissue>Testis</tissue>
    </source>
</reference>
<reference key="2">
    <citation type="journal article" date="2007" name="BMC Genomics">
        <title>The full-ORF clone resource of the German cDNA consortium.</title>
        <authorList>
            <person name="Bechtel S."/>
            <person name="Rosenfelder H."/>
            <person name="Duda A."/>
            <person name="Schmidt C.P."/>
            <person name="Ernst U."/>
            <person name="Wellenreuther R."/>
            <person name="Mehrle A."/>
            <person name="Schuster C."/>
            <person name="Bahr A."/>
            <person name="Bloecker H."/>
            <person name="Heubner D."/>
            <person name="Hoerlein A."/>
            <person name="Michel G."/>
            <person name="Wedler H."/>
            <person name="Koehrer K."/>
            <person name="Ottenwaelder B."/>
            <person name="Poustka A."/>
            <person name="Wiemann S."/>
            <person name="Schupp I."/>
        </authorList>
    </citation>
    <scope>NUCLEOTIDE SEQUENCE [LARGE SCALE MRNA] (ISOFORM 2)</scope>
    <source>
        <tissue>Stomach</tissue>
    </source>
</reference>
<reference key="3">
    <citation type="journal article" date="2003" name="Nature">
        <title>The DNA sequence and analysis of human chromosome 6.</title>
        <authorList>
            <person name="Mungall A.J."/>
            <person name="Palmer S.A."/>
            <person name="Sims S.K."/>
            <person name="Edwards C.A."/>
            <person name="Ashurst J.L."/>
            <person name="Wilming L."/>
            <person name="Jones M.C."/>
            <person name="Horton R."/>
            <person name="Hunt S.E."/>
            <person name="Scott C.E."/>
            <person name="Gilbert J.G.R."/>
            <person name="Clamp M.E."/>
            <person name="Bethel G."/>
            <person name="Milne S."/>
            <person name="Ainscough R."/>
            <person name="Almeida J.P."/>
            <person name="Ambrose K.D."/>
            <person name="Andrews T.D."/>
            <person name="Ashwell R.I.S."/>
            <person name="Babbage A.K."/>
            <person name="Bagguley C.L."/>
            <person name="Bailey J."/>
            <person name="Banerjee R."/>
            <person name="Barker D.J."/>
            <person name="Barlow K.F."/>
            <person name="Bates K."/>
            <person name="Beare D.M."/>
            <person name="Beasley H."/>
            <person name="Beasley O."/>
            <person name="Bird C.P."/>
            <person name="Blakey S.E."/>
            <person name="Bray-Allen S."/>
            <person name="Brook J."/>
            <person name="Brown A.J."/>
            <person name="Brown J.Y."/>
            <person name="Burford D.C."/>
            <person name="Burrill W."/>
            <person name="Burton J."/>
            <person name="Carder C."/>
            <person name="Carter N.P."/>
            <person name="Chapman J.C."/>
            <person name="Clark S.Y."/>
            <person name="Clark G."/>
            <person name="Clee C.M."/>
            <person name="Clegg S."/>
            <person name="Cobley V."/>
            <person name="Collier R.E."/>
            <person name="Collins J.E."/>
            <person name="Colman L.K."/>
            <person name="Corby N.R."/>
            <person name="Coville G.J."/>
            <person name="Culley K.M."/>
            <person name="Dhami P."/>
            <person name="Davies J."/>
            <person name="Dunn M."/>
            <person name="Earthrowl M.E."/>
            <person name="Ellington A.E."/>
            <person name="Evans K.A."/>
            <person name="Faulkner L."/>
            <person name="Francis M.D."/>
            <person name="Frankish A."/>
            <person name="Frankland J."/>
            <person name="French L."/>
            <person name="Garner P."/>
            <person name="Garnett J."/>
            <person name="Ghori M.J."/>
            <person name="Gilby L.M."/>
            <person name="Gillson C.J."/>
            <person name="Glithero R.J."/>
            <person name="Grafham D.V."/>
            <person name="Grant M."/>
            <person name="Gribble S."/>
            <person name="Griffiths C."/>
            <person name="Griffiths M.N.D."/>
            <person name="Hall R."/>
            <person name="Halls K.S."/>
            <person name="Hammond S."/>
            <person name="Harley J.L."/>
            <person name="Hart E.A."/>
            <person name="Heath P.D."/>
            <person name="Heathcott R."/>
            <person name="Holmes S.J."/>
            <person name="Howden P.J."/>
            <person name="Howe K.L."/>
            <person name="Howell G.R."/>
            <person name="Huckle E."/>
            <person name="Humphray S.J."/>
            <person name="Humphries M.D."/>
            <person name="Hunt A.R."/>
            <person name="Johnson C.M."/>
            <person name="Joy A.A."/>
            <person name="Kay M."/>
            <person name="Keenan S.J."/>
            <person name="Kimberley A.M."/>
            <person name="King A."/>
            <person name="Laird G.K."/>
            <person name="Langford C."/>
            <person name="Lawlor S."/>
            <person name="Leongamornlert D.A."/>
            <person name="Leversha M."/>
            <person name="Lloyd C.R."/>
            <person name="Lloyd D.M."/>
            <person name="Loveland J.E."/>
            <person name="Lovell J."/>
            <person name="Martin S."/>
            <person name="Mashreghi-Mohammadi M."/>
            <person name="Maslen G.L."/>
            <person name="Matthews L."/>
            <person name="McCann O.T."/>
            <person name="McLaren S.J."/>
            <person name="McLay K."/>
            <person name="McMurray A."/>
            <person name="Moore M.J.F."/>
            <person name="Mullikin J.C."/>
            <person name="Niblett D."/>
            <person name="Nickerson T."/>
            <person name="Novik K.L."/>
            <person name="Oliver K."/>
            <person name="Overton-Larty E.K."/>
            <person name="Parker A."/>
            <person name="Patel R."/>
            <person name="Pearce A.V."/>
            <person name="Peck A.I."/>
            <person name="Phillimore B.J.C.T."/>
            <person name="Phillips S."/>
            <person name="Plumb R.W."/>
            <person name="Porter K.M."/>
            <person name="Ramsey Y."/>
            <person name="Ranby S.A."/>
            <person name="Rice C.M."/>
            <person name="Ross M.T."/>
            <person name="Searle S.M."/>
            <person name="Sehra H.K."/>
            <person name="Sheridan E."/>
            <person name="Skuce C.D."/>
            <person name="Smith S."/>
            <person name="Smith M."/>
            <person name="Spraggon L."/>
            <person name="Squares S.L."/>
            <person name="Steward C.A."/>
            <person name="Sycamore N."/>
            <person name="Tamlyn-Hall G."/>
            <person name="Tester J."/>
            <person name="Theaker A.J."/>
            <person name="Thomas D.W."/>
            <person name="Thorpe A."/>
            <person name="Tracey A."/>
            <person name="Tromans A."/>
            <person name="Tubby B."/>
            <person name="Wall M."/>
            <person name="Wallis J.M."/>
            <person name="West A.P."/>
            <person name="White S.S."/>
            <person name="Whitehead S.L."/>
            <person name="Whittaker H."/>
            <person name="Wild A."/>
            <person name="Willey D.J."/>
            <person name="Wilmer T.E."/>
            <person name="Wood J.M."/>
            <person name="Wray P.W."/>
            <person name="Wyatt J.C."/>
            <person name="Young L."/>
            <person name="Younger R.M."/>
            <person name="Bentley D.R."/>
            <person name="Coulson A."/>
            <person name="Durbin R.M."/>
            <person name="Hubbard T."/>
            <person name="Sulston J.E."/>
            <person name="Dunham I."/>
            <person name="Rogers J."/>
            <person name="Beck S."/>
        </authorList>
    </citation>
    <scope>NUCLEOTIDE SEQUENCE [LARGE SCALE GENOMIC DNA]</scope>
    <scope>VARIANT LYS-419</scope>
</reference>
<reference key="4">
    <citation type="journal article" date="2006" name="Genetics">
        <title>Rapid evolution of major histocompatibility complex class I genes in primates generates new disease alleles in humans via hitchhiking diversity.</title>
        <authorList>
            <person name="Shiina T."/>
            <person name="Ota M."/>
            <person name="Shimizu S."/>
            <person name="Katsuyama Y."/>
            <person name="Hashimoto N."/>
            <person name="Takasu M."/>
            <person name="Anzai T."/>
            <person name="Kulski J.K."/>
            <person name="Kikkawa E."/>
            <person name="Naruse T."/>
            <person name="Kimura N."/>
            <person name="Yanagiya K."/>
            <person name="Watanabe A."/>
            <person name="Hosomichi K."/>
            <person name="Kohara S."/>
            <person name="Iwamoto C."/>
            <person name="Umehara Y."/>
            <person name="Meyer A."/>
            <person name="Wanner V."/>
            <person name="Sano K."/>
            <person name="Macquin C."/>
            <person name="Ikeo K."/>
            <person name="Tokunaga K."/>
            <person name="Gojobori T."/>
            <person name="Inoko H."/>
            <person name="Bahram S."/>
        </authorList>
    </citation>
    <scope>NUCLEOTIDE SEQUENCE [LARGE SCALE GENOMIC DNA]</scope>
    <source>
        <tissue>Peripheral blood leukocyte</tissue>
    </source>
</reference>
<reference key="5">
    <citation type="journal article" date="2004" name="Genome Res.">
        <title>The status, quality, and expansion of the NIH full-length cDNA project: the Mammalian Gene Collection (MGC).</title>
        <authorList>
            <consortium name="The MGC Project Team"/>
        </authorList>
    </citation>
    <scope>NUCLEOTIDE SEQUENCE [LARGE SCALE MRNA] (ISOFORM 2)</scope>
    <source>
        <tissue>Colon</tissue>
    </source>
</reference>
<reference key="6">
    <citation type="journal article" date="2018" name="Biochem. Biophys. Res. Commun.">
        <title>High expression of diffuse panbronchiolitis critical region 1 gene promotes cell proliferation, migration and invasion in pancreatic ductal adenocarcinoma.</title>
        <authorList>
            <person name="Yan J."/>
            <person name="Chen G."/>
            <person name="Zhao X."/>
            <person name="Chen F."/>
            <person name="Wang T."/>
            <person name="Miao F."/>
        </authorList>
    </citation>
    <scope>FUNCTION</scope>
    <scope>SUBCELLULAR LOCATION</scope>
    <scope>TISSUE SPECIFICITY</scope>
</reference>
<gene>
    <name evidence="11" type="primary">MUCL3</name>
    <name type="synonym">C6orf37</name>
    <name evidence="9 11" type="synonym">DPCR1</name>
    <name type="synonym">PBLT</name>
</gene>
<comment type="function">
    <text evidence="5">May modulate NF-kappaB signaling and play a role in cell growth.</text>
</comment>
<comment type="subcellular location">
    <subcellularLocation>
        <location evidence="5">Cell membrane</location>
        <topology evidence="10">Single-pass type I membrane protein</topology>
    </subcellularLocation>
    <subcellularLocation>
        <location evidence="5">Cytoplasm</location>
    </subcellularLocation>
</comment>
<comment type="alternative products">
    <event type="alternative splicing"/>
    <isoform>
        <id>Q3MIW9-1</id>
        <name>1</name>
        <sequence type="displayed"/>
    </isoform>
    <isoform>
        <id>Q3MIW9-2</id>
        <name>2</name>
        <sequence type="described" ref="VSP_031268 VSP_031269"/>
    </isoform>
</comment>
<comment type="tissue specificity">
    <text evidence="3 5">Detected in lung, esophagus, stomach, rectum, skin, cervix, testis, kidney, uterus and small intestine (PubMed:12185533). Expressed in pancreas (at protein level) (PubMed:29242154).</text>
</comment>
<comment type="developmental stage">
    <text evidence="3">Expressed in fetal heart, kidney and lung.</text>
</comment>
<comment type="sequence caution" evidence="10">
    <conflict type="erroneous initiation">
        <sequence resource="EMBL-CDS" id="CAH56248"/>
    </conflict>
    <text>Extended N-terminus.</text>
</comment>
<dbReference type="EMBL" id="AB064272">
    <property type="protein sequence ID" value="BAB82383.1"/>
    <property type="molecule type" value="mRNA"/>
</dbReference>
<dbReference type="EMBL" id="AL833738">
    <property type="protein sequence ID" value="CAH56248.1"/>
    <property type="status" value="ALT_INIT"/>
    <property type="molecule type" value="mRNA"/>
</dbReference>
<dbReference type="EMBL" id="AL662854">
    <property type="status" value="NOT_ANNOTATED_CDS"/>
    <property type="molecule type" value="Genomic_DNA"/>
</dbReference>
<dbReference type="EMBL" id="AL773541">
    <property type="status" value="NOT_ANNOTATED_CDS"/>
    <property type="molecule type" value="Genomic_DNA"/>
</dbReference>
<dbReference type="EMBL" id="AB110931">
    <property type="protein sequence ID" value="BAD13697.1"/>
    <property type="molecule type" value="Genomic_DNA"/>
</dbReference>
<dbReference type="EMBL" id="AB110932">
    <property type="protein sequence ID" value="BAD13698.1"/>
    <property type="molecule type" value="Genomic_DNA"/>
</dbReference>
<dbReference type="EMBL" id="AB202102">
    <property type="protein sequence ID" value="BAE78623.1"/>
    <property type="molecule type" value="Genomic_DNA"/>
</dbReference>
<dbReference type="EMBL" id="BC069477">
    <property type="protein sequence ID" value="AAH69477.1"/>
    <property type="molecule type" value="mRNA"/>
</dbReference>
<dbReference type="EMBL" id="BC101661">
    <property type="protein sequence ID" value="AAI01662.1"/>
    <property type="molecule type" value="mRNA"/>
</dbReference>
<dbReference type="EMBL" id="BC101663">
    <property type="protein sequence ID" value="AAI01664.1"/>
    <property type="molecule type" value="mRNA"/>
</dbReference>
<dbReference type="RefSeq" id="NP_543146.2">
    <property type="nucleotide sequence ID" value="NM_080870.3"/>
</dbReference>
<dbReference type="BioGRID" id="126433">
    <property type="interactions" value="1"/>
</dbReference>
<dbReference type="STRING" id="9606.ENSP00000417182"/>
<dbReference type="GlyCosmos" id="Q3MIW9">
    <property type="glycosylation" value="3 sites, No reported glycans"/>
</dbReference>
<dbReference type="GlyGen" id="Q3MIW9">
    <property type="glycosylation" value="3 sites, 1 N-linked glycan (1 site)"/>
</dbReference>
<dbReference type="iPTMnet" id="Q3MIW9"/>
<dbReference type="PhosphoSitePlus" id="Q3MIW9"/>
<dbReference type="BioMuta" id="DPCR1"/>
<dbReference type="DMDM" id="172046709"/>
<dbReference type="jPOST" id="Q3MIW9"/>
<dbReference type="MassIVE" id="Q3MIW9"/>
<dbReference type="PaxDb" id="9606-ENSP00000417182"/>
<dbReference type="PeptideAtlas" id="Q3MIW9"/>
<dbReference type="ProteomicsDB" id="61797">
    <molecule id="Q3MIW9-1"/>
</dbReference>
<dbReference type="ProteomicsDB" id="61798">
    <molecule id="Q3MIW9-2"/>
</dbReference>
<dbReference type="Antibodypedia" id="2593">
    <property type="antibodies" value="157 antibodies from 21 providers"/>
</dbReference>
<dbReference type="DNASU" id="135656"/>
<dbReference type="Ensembl" id="ENST00000546848.1">
    <molecule id="Q3MIW9-1"/>
    <property type="protein sequence ID" value="ENSP00000448383.1"/>
    <property type="gene ID" value="ENSG00000232251.5"/>
</dbReference>
<dbReference type="Ensembl" id="ENST00000547331.1">
    <molecule id="Q3MIW9-1"/>
    <property type="protein sequence ID" value="ENSP00000446847.1"/>
    <property type="gene ID" value="ENSG00000229284.4"/>
</dbReference>
<dbReference type="GeneID" id="135656"/>
<dbReference type="KEGG" id="hsa:135656"/>
<dbReference type="UCSC" id="uc063mxo.1">
    <molecule id="Q3MIW9-1"/>
    <property type="organism name" value="human"/>
</dbReference>
<dbReference type="AGR" id="HGNC:21666"/>
<dbReference type="CTD" id="135656"/>
<dbReference type="DisGeNET" id="135656"/>
<dbReference type="GeneCards" id="MUCL3"/>
<dbReference type="HGNC" id="HGNC:21666">
    <property type="gene designation" value="MUCL3"/>
</dbReference>
<dbReference type="HPA" id="ENSG00000168631">
    <property type="expression patterns" value="Tissue enriched (stomach)"/>
</dbReference>
<dbReference type="MalaCards" id="MUCL3"/>
<dbReference type="MIM" id="613928">
    <property type="type" value="gene"/>
</dbReference>
<dbReference type="neXtProt" id="NX_Q3MIW9"/>
<dbReference type="Orphanet" id="171700">
    <property type="disease" value="Diffuse panbronchiolitis"/>
</dbReference>
<dbReference type="PharmGKB" id="PA134926573"/>
<dbReference type="VEuPathDB" id="HostDB:ENSG00000168631"/>
<dbReference type="HOGENOM" id="CLU_040657_1_0_1"/>
<dbReference type="InParanoid" id="Q3MIW9"/>
<dbReference type="OrthoDB" id="9838476at2759"/>
<dbReference type="PAN-GO" id="Q3MIW9">
    <property type="GO annotations" value="0 GO annotations based on evolutionary models"/>
</dbReference>
<dbReference type="PhylomeDB" id="Q3MIW9"/>
<dbReference type="PathwayCommons" id="Q3MIW9"/>
<dbReference type="BioGRID-ORCS" id="135656">
    <property type="hits" value="17 hits in 1132 CRISPR screens"/>
</dbReference>
<dbReference type="ChiTaRS" id="FAM46A">
    <property type="organism name" value="human"/>
</dbReference>
<dbReference type="GenomeRNAi" id="135656"/>
<dbReference type="Pharos" id="Q3MIW9">
    <property type="development level" value="Tbio"/>
</dbReference>
<dbReference type="PRO" id="PR:Q3MIW9"/>
<dbReference type="Proteomes" id="UP000005640">
    <property type="component" value="Unplaced"/>
</dbReference>
<dbReference type="RNAct" id="Q3MIW9">
    <property type="molecule type" value="protein"/>
</dbReference>
<dbReference type="Bgee" id="ENSG00000168631">
    <property type="expression patterns" value="Expressed in mucosa of stomach and 38 other cell types or tissues"/>
</dbReference>
<dbReference type="ExpressionAtlas" id="Q3MIW9">
    <property type="expression patterns" value="baseline and differential"/>
</dbReference>
<dbReference type="GO" id="GO:0005737">
    <property type="term" value="C:cytoplasm"/>
    <property type="evidence" value="ECO:0007669"/>
    <property type="project" value="UniProtKB-SubCell"/>
</dbReference>
<dbReference type="GO" id="GO:0005886">
    <property type="term" value="C:plasma membrane"/>
    <property type="evidence" value="ECO:0007669"/>
    <property type="project" value="UniProtKB-SubCell"/>
</dbReference>
<dbReference type="InterPro" id="IPR026623">
    <property type="entry name" value="MUCL3"/>
</dbReference>
<dbReference type="PANTHER" id="PTHR22094">
    <property type="entry name" value="DIFFUSE PANBRONCHIOLITIS CRITICAL REGION GENE 1"/>
    <property type="match status" value="1"/>
</dbReference>
<dbReference type="PANTHER" id="PTHR22094:SF0">
    <property type="entry name" value="MUCIN-LIKE PROTEIN 3"/>
    <property type="match status" value="1"/>
</dbReference>
<protein>
    <recommendedName>
        <fullName evidence="10">Mucin-like protein 3</fullName>
    </recommendedName>
    <alternativeName>
        <fullName evidence="9">Diffuse panbronchiolitis critical region protein 1</fullName>
    </alternativeName>
</protein>
<evidence type="ECO:0000255" key="1"/>
<evidence type="ECO:0000256" key="2">
    <source>
        <dbReference type="SAM" id="MobiDB-lite"/>
    </source>
</evidence>
<evidence type="ECO:0000269" key="3">
    <source>
    </source>
</evidence>
<evidence type="ECO:0000269" key="4">
    <source>
    </source>
</evidence>
<evidence type="ECO:0000269" key="5">
    <source>
    </source>
</evidence>
<evidence type="ECO:0000303" key="6">
    <source>
    </source>
</evidence>
<evidence type="ECO:0000303" key="7">
    <source>
    </source>
</evidence>
<evidence type="ECO:0000303" key="8">
    <source>
    </source>
</evidence>
<evidence type="ECO:0000303" key="9">
    <source>
    </source>
</evidence>
<evidence type="ECO:0000305" key="10"/>
<evidence type="ECO:0000312" key="11">
    <source>
        <dbReference type="HGNC" id="HGNC:21666"/>
    </source>
</evidence>
<accession>Q3MIW9</accession>
<accession>C9IZC0</accession>
<accession>Q658M7</accession>
<accession>Q8WYN2</accession>
<feature type="signal peptide" evidence="1">
    <location>
        <begin position="1"/>
        <end position="29"/>
    </location>
</feature>
<feature type="chain" id="PRO_0000318686" description="Mucin-like protein 3">
    <location>
        <begin position="30"/>
        <end position="517"/>
    </location>
</feature>
<feature type="topological domain" description="Extracellular" evidence="1">
    <location>
        <begin position="30"/>
        <end position="448"/>
    </location>
</feature>
<feature type="transmembrane region" description="Helical" evidence="1">
    <location>
        <begin position="449"/>
        <end position="469"/>
    </location>
</feature>
<feature type="topological domain" description="Cytoplasmic" evidence="1">
    <location>
        <begin position="470"/>
        <end position="517"/>
    </location>
</feature>
<feature type="region of interest" description="Disordered" evidence="2">
    <location>
        <begin position="67"/>
        <end position="341"/>
    </location>
</feature>
<feature type="compositionally biased region" description="Basic residues" evidence="2">
    <location>
        <begin position="83"/>
        <end position="93"/>
    </location>
</feature>
<feature type="compositionally biased region" description="Basic and acidic residues" evidence="2">
    <location>
        <begin position="105"/>
        <end position="116"/>
    </location>
</feature>
<feature type="compositionally biased region" description="Polar residues" evidence="2">
    <location>
        <begin position="169"/>
        <end position="179"/>
    </location>
</feature>
<feature type="compositionally biased region" description="Basic and acidic residues" evidence="2">
    <location>
        <begin position="180"/>
        <end position="190"/>
    </location>
</feature>
<feature type="compositionally biased region" description="Low complexity" evidence="2">
    <location>
        <begin position="194"/>
        <end position="213"/>
    </location>
</feature>
<feature type="compositionally biased region" description="Polar residues" evidence="2">
    <location>
        <begin position="214"/>
        <end position="225"/>
    </location>
</feature>
<feature type="compositionally biased region" description="Polar residues" evidence="2">
    <location>
        <begin position="232"/>
        <end position="243"/>
    </location>
</feature>
<feature type="compositionally biased region" description="Polar residues" evidence="2">
    <location>
        <begin position="263"/>
        <end position="283"/>
    </location>
</feature>
<feature type="compositionally biased region" description="Basic and acidic residues" evidence="2">
    <location>
        <begin position="305"/>
        <end position="317"/>
    </location>
</feature>
<feature type="glycosylation site" description="N-linked (GlcNAc...) asparagine" evidence="1">
    <location>
        <position position="88"/>
    </location>
</feature>
<feature type="glycosylation site" description="N-linked (GlcNAc...) asparagine" evidence="1">
    <location>
        <position position="124"/>
    </location>
</feature>
<feature type="glycosylation site" description="N-linked (GlcNAc...) asparagine" evidence="1">
    <location>
        <position position="338"/>
    </location>
</feature>
<feature type="splice variant" id="VSP_031268" description="In isoform 2." evidence="6 7 8">
    <location>
        <begin position="1"/>
        <end position="315"/>
    </location>
</feature>
<feature type="splice variant" id="VSP_031269" description="In isoform 2." evidence="6 7 8">
    <original>K</original>
    <variation>MTQVTEKSTEHPEKTTSTTEKTTRTPEKPTLYSE</variation>
    <location>
        <position position="316"/>
    </location>
</feature>
<feature type="sequence variant" id="VAR_038857" description="In dbSNP:rs11970154.">
    <original>G</original>
    <variation>R</variation>
    <location>
        <position position="337"/>
    </location>
</feature>
<feature type="sequence variant" id="VAR_038858" description="In dbSNP:rs3132580." evidence="4">
    <original>E</original>
    <variation>K</variation>
    <location>
        <position position="419"/>
    </location>
</feature>
<feature type="sequence variant" id="VAR_038859" description="In dbSNP:rs2240804.">
    <original>R</original>
    <variation>Q</variation>
    <location>
        <position position="517"/>
    </location>
</feature>
<proteinExistence type="evidence at protein level"/>
<organism>
    <name type="scientific">Homo sapiens</name>
    <name type="common">Human</name>
    <dbReference type="NCBI Taxonomy" id="9606"/>
    <lineage>
        <taxon>Eukaryota</taxon>
        <taxon>Metazoa</taxon>
        <taxon>Chordata</taxon>
        <taxon>Craniata</taxon>
        <taxon>Vertebrata</taxon>
        <taxon>Euteleostomi</taxon>
        <taxon>Mammalia</taxon>
        <taxon>Eutheria</taxon>
        <taxon>Euarchontoglires</taxon>
        <taxon>Primates</taxon>
        <taxon>Haplorrhini</taxon>
        <taxon>Catarrhini</taxon>
        <taxon>Hominidae</taxon>
        <taxon>Homo</taxon>
    </lineage>
</organism>
<name>MUCL3_HUMAN</name>
<keyword id="KW-0025">Alternative splicing</keyword>
<keyword id="KW-1003">Cell membrane</keyword>
<keyword id="KW-0963">Cytoplasm</keyword>
<keyword id="KW-0325">Glycoprotein</keyword>
<keyword id="KW-0472">Membrane</keyword>
<keyword id="KW-1267">Proteomics identification</keyword>
<keyword id="KW-1185">Reference proteome</keyword>
<keyword id="KW-0732">Signal</keyword>
<keyword id="KW-0812">Transmembrane</keyword>
<keyword id="KW-1133">Transmembrane helix</keyword>